<reference key="1">
    <citation type="journal article" date="2005" name="Science">
        <title>The transcriptional landscape of the mammalian genome.</title>
        <authorList>
            <person name="Carninci P."/>
            <person name="Kasukawa T."/>
            <person name="Katayama S."/>
            <person name="Gough J."/>
            <person name="Frith M.C."/>
            <person name="Maeda N."/>
            <person name="Oyama R."/>
            <person name="Ravasi T."/>
            <person name="Lenhard B."/>
            <person name="Wells C."/>
            <person name="Kodzius R."/>
            <person name="Shimokawa K."/>
            <person name="Bajic V.B."/>
            <person name="Brenner S.E."/>
            <person name="Batalov S."/>
            <person name="Forrest A.R."/>
            <person name="Zavolan M."/>
            <person name="Davis M.J."/>
            <person name="Wilming L.G."/>
            <person name="Aidinis V."/>
            <person name="Allen J.E."/>
            <person name="Ambesi-Impiombato A."/>
            <person name="Apweiler R."/>
            <person name="Aturaliya R.N."/>
            <person name="Bailey T.L."/>
            <person name="Bansal M."/>
            <person name="Baxter L."/>
            <person name="Beisel K.W."/>
            <person name="Bersano T."/>
            <person name="Bono H."/>
            <person name="Chalk A.M."/>
            <person name="Chiu K.P."/>
            <person name="Choudhary V."/>
            <person name="Christoffels A."/>
            <person name="Clutterbuck D.R."/>
            <person name="Crowe M.L."/>
            <person name="Dalla E."/>
            <person name="Dalrymple B.P."/>
            <person name="de Bono B."/>
            <person name="Della Gatta G."/>
            <person name="di Bernardo D."/>
            <person name="Down T."/>
            <person name="Engstrom P."/>
            <person name="Fagiolini M."/>
            <person name="Faulkner G."/>
            <person name="Fletcher C.F."/>
            <person name="Fukushima T."/>
            <person name="Furuno M."/>
            <person name="Futaki S."/>
            <person name="Gariboldi M."/>
            <person name="Georgii-Hemming P."/>
            <person name="Gingeras T.R."/>
            <person name="Gojobori T."/>
            <person name="Green R.E."/>
            <person name="Gustincich S."/>
            <person name="Harbers M."/>
            <person name="Hayashi Y."/>
            <person name="Hensch T.K."/>
            <person name="Hirokawa N."/>
            <person name="Hill D."/>
            <person name="Huminiecki L."/>
            <person name="Iacono M."/>
            <person name="Ikeo K."/>
            <person name="Iwama A."/>
            <person name="Ishikawa T."/>
            <person name="Jakt M."/>
            <person name="Kanapin A."/>
            <person name="Katoh M."/>
            <person name="Kawasawa Y."/>
            <person name="Kelso J."/>
            <person name="Kitamura H."/>
            <person name="Kitano H."/>
            <person name="Kollias G."/>
            <person name="Krishnan S.P."/>
            <person name="Kruger A."/>
            <person name="Kummerfeld S.K."/>
            <person name="Kurochkin I.V."/>
            <person name="Lareau L.F."/>
            <person name="Lazarevic D."/>
            <person name="Lipovich L."/>
            <person name="Liu J."/>
            <person name="Liuni S."/>
            <person name="McWilliam S."/>
            <person name="Madan Babu M."/>
            <person name="Madera M."/>
            <person name="Marchionni L."/>
            <person name="Matsuda H."/>
            <person name="Matsuzawa S."/>
            <person name="Miki H."/>
            <person name="Mignone F."/>
            <person name="Miyake S."/>
            <person name="Morris K."/>
            <person name="Mottagui-Tabar S."/>
            <person name="Mulder N."/>
            <person name="Nakano N."/>
            <person name="Nakauchi H."/>
            <person name="Ng P."/>
            <person name="Nilsson R."/>
            <person name="Nishiguchi S."/>
            <person name="Nishikawa S."/>
            <person name="Nori F."/>
            <person name="Ohara O."/>
            <person name="Okazaki Y."/>
            <person name="Orlando V."/>
            <person name="Pang K.C."/>
            <person name="Pavan W.J."/>
            <person name="Pavesi G."/>
            <person name="Pesole G."/>
            <person name="Petrovsky N."/>
            <person name="Piazza S."/>
            <person name="Reed J."/>
            <person name="Reid J.F."/>
            <person name="Ring B.Z."/>
            <person name="Ringwald M."/>
            <person name="Rost B."/>
            <person name="Ruan Y."/>
            <person name="Salzberg S.L."/>
            <person name="Sandelin A."/>
            <person name="Schneider C."/>
            <person name="Schoenbach C."/>
            <person name="Sekiguchi K."/>
            <person name="Semple C.A."/>
            <person name="Seno S."/>
            <person name="Sessa L."/>
            <person name="Sheng Y."/>
            <person name="Shibata Y."/>
            <person name="Shimada H."/>
            <person name="Shimada K."/>
            <person name="Silva D."/>
            <person name="Sinclair B."/>
            <person name="Sperling S."/>
            <person name="Stupka E."/>
            <person name="Sugiura K."/>
            <person name="Sultana R."/>
            <person name="Takenaka Y."/>
            <person name="Taki K."/>
            <person name="Tammoja K."/>
            <person name="Tan S.L."/>
            <person name="Tang S."/>
            <person name="Taylor M.S."/>
            <person name="Tegner J."/>
            <person name="Teichmann S.A."/>
            <person name="Ueda H.R."/>
            <person name="van Nimwegen E."/>
            <person name="Verardo R."/>
            <person name="Wei C.L."/>
            <person name="Yagi K."/>
            <person name="Yamanishi H."/>
            <person name="Zabarovsky E."/>
            <person name="Zhu S."/>
            <person name="Zimmer A."/>
            <person name="Hide W."/>
            <person name="Bult C."/>
            <person name="Grimmond S.M."/>
            <person name="Teasdale R.D."/>
            <person name="Liu E.T."/>
            <person name="Brusic V."/>
            <person name="Quackenbush J."/>
            <person name="Wahlestedt C."/>
            <person name="Mattick J.S."/>
            <person name="Hume D.A."/>
            <person name="Kai C."/>
            <person name="Sasaki D."/>
            <person name="Tomaru Y."/>
            <person name="Fukuda S."/>
            <person name="Kanamori-Katayama M."/>
            <person name="Suzuki M."/>
            <person name="Aoki J."/>
            <person name="Arakawa T."/>
            <person name="Iida J."/>
            <person name="Imamura K."/>
            <person name="Itoh M."/>
            <person name="Kato T."/>
            <person name="Kawaji H."/>
            <person name="Kawagashira N."/>
            <person name="Kawashima T."/>
            <person name="Kojima M."/>
            <person name="Kondo S."/>
            <person name="Konno H."/>
            <person name="Nakano K."/>
            <person name="Ninomiya N."/>
            <person name="Nishio T."/>
            <person name="Okada M."/>
            <person name="Plessy C."/>
            <person name="Shibata K."/>
            <person name="Shiraki T."/>
            <person name="Suzuki S."/>
            <person name="Tagami M."/>
            <person name="Waki K."/>
            <person name="Watahiki A."/>
            <person name="Okamura-Oho Y."/>
            <person name="Suzuki H."/>
            <person name="Kawai J."/>
            <person name="Hayashizaki Y."/>
        </authorList>
    </citation>
    <scope>NUCLEOTIDE SEQUENCE [LARGE SCALE MRNA]</scope>
    <source>
        <strain>C57BL/6J</strain>
        <tissue>Tongue</tissue>
    </source>
</reference>
<reference key="2">
    <citation type="journal article" date="2004" name="Genome Res.">
        <title>The status, quality, and expansion of the NIH full-length cDNA project: the Mammalian Gene Collection (MGC).</title>
        <authorList>
            <consortium name="The MGC Project Team"/>
        </authorList>
    </citation>
    <scope>NUCLEOTIDE SEQUENCE [LARGE SCALE MRNA]</scope>
    <source>
        <strain>129</strain>
        <tissue>Mammary tumor</tissue>
    </source>
</reference>
<reference key="3">
    <citation type="journal article" date="2013" name="J. Allergy Clin. Immunol.">
        <title>A homozygous nonsense mutation in the gene for Tmem79, a component for the lamellar granule secretory system, produces spontaneous eczema in an experimental model of atopic dermatitis.</title>
        <authorList>
            <person name="Sasaki T."/>
            <person name="Shiohama A."/>
            <person name="Kubo A."/>
            <person name="Kawasaki H."/>
            <person name="Ishida-Yamamoto A."/>
            <person name="Yamada T."/>
            <person name="Hachiya T."/>
            <person name="Shimizu A."/>
            <person name="Okano H."/>
            <person name="Kudoh J."/>
            <person name="Amagai M."/>
        </authorList>
    </citation>
    <scope>FUNCTION</scope>
    <scope>SUBCELLULAR LOCATION</scope>
    <scope>TISSUE SPECIFICITY</scope>
</reference>
<reference key="4">
    <citation type="journal article" date="2013" name="J. Allergy Clin. Immunol.">
        <title>Tmem79/Matt is the matted mouse gene and is a predisposing gene for atopic dermatitis in human subjects.</title>
        <authorList>
            <person name="Saunders S.P."/>
            <person name="Goh C.S."/>
            <person name="Brown S.J."/>
            <person name="Palmer C.N."/>
            <person name="Porter R.M."/>
            <person name="Cole C."/>
            <person name="Campbell L.E."/>
            <person name="Gierlinski M."/>
            <person name="Barton G.J."/>
            <person name="Schneider G."/>
            <person name="Balmain A."/>
            <person name="Prescott A.R."/>
            <person name="Weidinger S."/>
            <person name="Baurecht H."/>
            <person name="Kabesch M."/>
            <person name="Gieger C."/>
            <person name="Lee Y.A."/>
            <person name="Tavendale R."/>
            <person name="Mukhopadhyay S."/>
            <person name="Turner S.W."/>
            <person name="Madhok V.B."/>
            <person name="Sullivan F.M."/>
            <person name="Relton C."/>
            <person name="Burn J."/>
            <person name="Meggitt S."/>
            <person name="Smith C.H."/>
            <person name="Allen M.A."/>
            <person name="Barker J.N."/>
            <person name="Reynolds N.J."/>
            <person name="Cordell H.J."/>
            <person name="Irvine A.D."/>
            <person name="McLean W.H."/>
            <person name="Sandilands A."/>
            <person name="Fallon P.G."/>
        </authorList>
    </citation>
    <scope>INVOLVEMENT IN ATOPIC DERMATITIS</scope>
    <scope>TISSUE SPECIFICITY</scope>
</reference>
<dbReference type="EMBL" id="AK009760">
    <property type="protein sequence ID" value="BAB26484.1"/>
    <property type="molecule type" value="mRNA"/>
</dbReference>
<dbReference type="EMBL" id="BC003309">
    <property type="protein sequence ID" value="AAH03309.1"/>
    <property type="molecule type" value="mRNA"/>
</dbReference>
<dbReference type="CCDS" id="CCDS17470.1"/>
<dbReference type="RefSeq" id="NP_001405960.1">
    <property type="nucleotide sequence ID" value="NM_001419031.1"/>
</dbReference>
<dbReference type="RefSeq" id="NP_077208.1">
    <property type="nucleotide sequence ID" value="NM_024246.6"/>
</dbReference>
<dbReference type="RefSeq" id="XP_006502187.1">
    <property type="nucleotide sequence ID" value="XM_006502124.2"/>
</dbReference>
<dbReference type="RefSeq" id="XP_006502188.1">
    <property type="nucleotide sequence ID" value="XM_006502125.4"/>
</dbReference>
<dbReference type="SMR" id="Q9D709"/>
<dbReference type="FunCoup" id="Q9D709">
    <property type="interactions" value="274"/>
</dbReference>
<dbReference type="STRING" id="10090.ENSMUSP00000001456"/>
<dbReference type="iPTMnet" id="Q9D709"/>
<dbReference type="PhosphoSitePlus" id="Q9D709"/>
<dbReference type="PaxDb" id="10090-ENSMUSP00000001456"/>
<dbReference type="ProteomicsDB" id="259590"/>
<dbReference type="Antibodypedia" id="34211">
    <property type="antibodies" value="82 antibodies from 19 providers"/>
</dbReference>
<dbReference type="Ensembl" id="ENSMUST00000001456.11">
    <property type="protein sequence ID" value="ENSMUSP00000001456.5"/>
    <property type="gene ID" value="ENSMUSG00000001420.14"/>
</dbReference>
<dbReference type="Ensembl" id="ENSMUST00000107552.2">
    <property type="protein sequence ID" value="ENSMUSP00000103176.2"/>
    <property type="gene ID" value="ENSMUSG00000001420.14"/>
</dbReference>
<dbReference type="Ensembl" id="ENSMUST00000107553.8">
    <property type="protein sequence ID" value="ENSMUSP00000103177.2"/>
    <property type="gene ID" value="ENSMUSG00000001420.14"/>
</dbReference>
<dbReference type="GeneID" id="71913"/>
<dbReference type="KEGG" id="mmu:71913"/>
<dbReference type="UCSC" id="uc008puq.1">
    <property type="organism name" value="mouse"/>
</dbReference>
<dbReference type="AGR" id="MGI:1919163"/>
<dbReference type="CTD" id="84283"/>
<dbReference type="MGI" id="MGI:1919163">
    <property type="gene designation" value="Tmem79"/>
</dbReference>
<dbReference type="VEuPathDB" id="HostDB:ENSMUSG00000001420"/>
<dbReference type="eggNOG" id="ENOG502QVUB">
    <property type="taxonomic scope" value="Eukaryota"/>
</dbReference>
<dbReference type="GeneTree" id="ENSGT00390000002390"/>
<dbReference type="HOGENOM" id="CLU_062246_1_0_1"/>
<dbReference type="InParanoid" id="Q9D709"/>
<dbReference type="OMA" id="DPQCIER"/>
<dbReference type="OrthoDB" id="8887147at2759"/>
<dbReference type="PhylomeDB" id="Q9D709"/>
<dbReference type="TreeFam" id="TF333310"/>
<dbReference type="BioGRID-ORCS" id="71913">
    <property type="hits" value="6 hits in 78 CRISPR screens"/>
</dbReference>
<dbReference type="ChiTaRS" id="Tmem79">
    <property type="organism name" value="mouse"/>
</dbReference>
<dbReference type="PRO" id="PR:Q9D709"/>
<dbReference type="Proteomes" id="UP000000589">
    <property type="component" value="Chromosome 3"/>
</dbReference>
<dbReference type="RNAct" id="Q9D709">
    <property type="molecule type" value="protein"/>
</dbReference>
<dbReference type="Bgee" id="ENSMUSG00000001420">
    <property type="expression patterns" value="Expressed in lumbar dorsal root ganglion and 121 other cell types or tissues"/>
</dbReference>
<dbReference type="ExpressionAtlas" id="Q9D709">
    <property type="expression patterns" value="baseline and differential"/>
</dbReference>
<dbReference type="GO" id="GO:0005737">
    <property type="term" value="C:cytoplasm"/>
    <property type="evidence" value="ECO:0000314"/>
    <property type="project" value="MGI"/>
</dbReference>
<dbReference type="GO" id="GO:0005765">
    <property type="term" value="C:lysosomal membrane"/>
    <property type="evidence" value="ECO:0000314"/>
    <property type="project" value="UniProtKB"/>
</dbReference>
<dbReference type="GO" id="GO:0032588">
    <property type="term" value="C:trans-Golgi network membrane"/>
    <property type="evidence" value="ECO:0000314"/>
    <property type="project" value="UniProtKB"/>
</dbReference>
<dbReference type="GO" id="GO:0042802">
    <property type="term" value="F:identical protein binding"/>
    <property type="evidence" value="ECO:0007669"/>
    <property type="project" value="Ensembl"/>
</dbReference>
<dbReference type="GO" id="GO:0070268">
    <property type="term" value="P:cornification"/>
    <property type="evidence" value="ECO:0000315"/>
    <property type="project" value="MGI"/>
</dbReference>
<dbReference type="GO" id="GO:0042335">
    <property type="term" value="P:cuticle development"/>
    <property type="evidence" value="ECO:0000315"/>
    <property type="project" value="MGI"/>
</dbReference>
<dbReference type="GO" id="GO:0002070">
    <property type="term" value="P:epithelial cell maturation"/>
    <property type="evidence" value="ECO:0000315"/>
    <property type="project" value="UniProtKB"/>
</dbReference>
<dbReference type="GO" id="GO:0061436">
    <property type="term" value="P:establishment of skin barrier"/>
    <property type="evidence" value="ECO:0000315"/>
    <property type="project" value="UniProtKB"/>
</dbReference>
<dbReference type="GO" id="GO:0031069">
    <property type="term" value="P:hair follicle morphogenesis"/>
    <property type="evidence" value="ECO:0000315"/>
    <property type="project" value="MGI"/>
</dbReference>
<dbReference type="GO" id="GO:0045684">
    <property type="term" value="P:positive regulation of epidermis development"/>
    <property type="evidence" value="ECO:0000315"/>
    <property type="project" value="UniProtKB"/>
</dbReference>
<dbReference type="GO" id="GO:0045055">
    <property type="term" value="P:regulated exocytosis"/>
    <property type="evidence" value="ECO:0000315"/>
    <property type="project" value="UniProtKB"/>
</dbReference>
<dbReference type="PANTHER" id="PTHR31004">
    <property type="entry name" value="TRANSMEMBRANE PROTEIN 79"/>
    <property type="match status" value="1"/>
</dbReference>
<dbReference type="PANTHER" id="PTHR31004:SF1">
    <property type="entry name" value="TRANSMEMBRANE PROTEIN 79"/>
    <property type="match status" value="1"/>
</dbReference>
<name>TMM79_MOUSE</name>
<keyword id="KW-0333">Golgi apparatus</keyword>
<keyword id="KW-0458">Lysosome</keyword>
<keyword id="KW-0472">Membrane</keyword>
<keyword id="KW-1185">Reference proteome</keyword>
<keyword id="KW-0812">Transmembrane</keyword>
<keyword id="KW-1133">Transmembrane helix</keyword>
<comment type="function">
    <text evidence="3">Contributes to the epidermal integrity and skin barrier function. Plays a role in the lamellar granule (LG) secretory system and in the stratum corneum (SC) epithelial cell formation.</text>
</comment>
<comment type="subcellular location">
    <subcellularLocation>
        <location evidence="3">Lysosome</location>
    </subcellularLocation>
    <subcellularLocation>
        <location evidence="3">Golgi apparatus</location>
        <location evidence="3">trans-Golgi network</location>
    </subcellularLocation>
    <subcellularLocation>
        <location evidence="5">Membrane</location>
        <topology evidence="5">Multi-pass membrane protein</topology>
    </subcellularLocation>
    <text>Colocalized with TGOLN2 in the trans-Golgi network. Colocalized with LAMP1 in the lysosome.</text>
</comment>
<comment type="tissue specificity">
    <text evidence="3 4">Expressed in the epidermis of the skin. Expressed in epithelial cells of the outermost layer of the stratum granulosum (SG) and in hair follicles (at protein level).</text>
</comment>
<comment type="disease">
    <text evidence="4">Defects in Tmem79 are the cause of the spontaneous matted (matt) mutant phenotype, a model for human atopic dermatitis. Atopic dermatitis (ma/ma) mice have a matted hair phenotype with progressive dermatitis-like skin inflammation and a scratching behavior. Mice display an altered skin barrier that facilitates allergic sensitization.</text>
</comment>
<gene>
    <name type="primary">Tmem79</name>
    <name type="synonym">Matt</name>
</gene>
<accession>Q9D709</accession>
<feature type="chain" id="PRO_0000254119" description="Transmembrane protein 79">
    <location>
        <begin position="1"/>
        <end position="391"/>
    </location>
</feature>
<feature type="topological domain" description="Cytoplasmic" evidence="1">
    <location>
        <begin position="1"/>
        <end position="200"/>
    </location>
</feature>
<feature type="transmembrane region" description="Helical" evidence="1">
    <location>
        <begin position="201"/>
        <end position="221"/>
    </location>
</feature>
<feature type="topological domain" description="Extracellular" evidence="1">
    <location>
        <begin position="222"/>
        <end position="240"/>
    </location>
</feature>
<feature type="transmembrane region" description="Helical" evidence="1">
    <location>
        <begin position="241"/>
        <end position="261"/>
    </location>
</feature>
<feature type="topological domain" description="Cytoplasmic" evidence="1">
    <location>
        <begin position="262"/>
        <end position="279"/>
    </location>
</feature>
<feature type="transmembrane region" description="Helical" evidence="1">
    <location>
        <begin position="280"/>
        <end position="300"/>
    </location>
</feature>
<feature type="topological domain" description="Extracellular" evidence="1">
    <location>
        <begin position="301"/>
        <end position="309"/>
    </location>
</feature>
<feature type="transmembrane region" description="Helical" evidence="1">
    <location>
        <begin position="310"/>
        <end position="330"/>
    </location>
</feature>
<feature type="topological domain" description="Cytoplasmic" evidence="1">
    <location>
        <begin position="331"/>
        <end position="339"/>
    </location>
</feature>
<feature type="transmembrane region" description="Helical" evidence="1">
    <location>
        <begin position="340"/>
        <end position="360"/>
    </location>
</feature>
<feature type="topological domain" description="Extracellular" evidence="1">
    <location>
        <begin position="361"/>
        <end position="391"/>
    </location>
</feature>
<feature type="region of interest" description="Disordered" evidence="2">
    <location>
        <begin position="1"/>
        <end position="114"/>
    </location>
</feature>
<feature type="compositionally biased region" description="Basic and acidic residues" evidence="2">
    <location>
        <begin position="103"/>
        <end position="114"/>
    </location>
</feature>
<organism>
    <name type="scientific">Mus musculus</name>
    <name type="common">Mouse</name>
    <dbReference type="NCBI Taxonomy" id="10090"/>
    <lineage>
        <taxon>Eukaryota</taxon>
        <taxon>Metazoa</taxon>
        <taxon>Chordata</taxon>
        <taxon>Craniata</taxon>
        <taxon>Vertebrata</taxon>
        <taxon>Euteleostomi</taxon>
        <taxon>Mammalia</taxon>
        <taxon>Eutheria</taxon>
        <taxon>Euarchontoglires</taxon>
        <taxon>Glires</taxon>
        <taxon>Rodentia</taxon>
        <taxon>Myomorpha</taxon>
        <taxon>Muroidea</taxon>
        <taxon>Muridae</taxon>
        <taxon>Murinae</taxon>
        <taxon>Mus</taxon>
        <taxon>Mus</taxon>
    </lineage>
</organism>
<proteinExistence type="evidence at protein level"/>
<evidence type="ECO:0000255" key="1"/>
<evidence type="ECO:0000256" key="2">
    <source>
        <dbReference type="SAM" id="MobiDB-lite"/>
    </source>
</evidence>
<evidence type="ECO:0000269" key="3">
    <source>
    </source>
</evidence>
<evidence type="ECO:0000269" key="4">
    <source>
    </source>
</evidence>
<evidence type="ECO:0000305" key="5"/>
<sequence>MTEPETLALLDMKEPETPEKSPPQALVLQSEEEGGTESPGTESLRVGSSVGSPIVREGPEDGPDSTISEAATLPWGTDPHPSAPLPDPPGWRDIEPEPLESEAPTKSEEPFKEDANLLPEKTVRAFVPIDLQCIERKPQEERILHRDAGPGELRNFLPARLSHPEPPERKWAEAVVRPPGRSCGGCGSCGGREALRAVASVVAALIFFPCLLYGAYAFLPFDAPRLPTMSSRLVYTLRCGVFATFPIVLGLLVYGLSLLCFSALRPFGEPRREVEIHRQYVAQSVQLFILYFFNLAVLSTYLPQDTLKLLPLLTGLFAISRLIYWLTFAVGRSFRGFGYGLTFLPLLAMLVWNLYYMFVVEPERMLTASESRLDYPDHARSVSDYRPRSWG</sequence>
<protein>
    <recommendedName>
        <fullName>Transmembrane protein 79</fullName>
    </recommendedName>
    <alternativeName>
        <fullName>Mattrin</fullName>
    </alternativeName>
</protein>